<reference key="1">
    <citation type="journal article" date="2002" name="Proc. Natl. Acad. Sci. U.S.A.">
        <title>Extensive mosaic structure revealed by the complete genome sequence of uropathogenic Escherichia coli.</title>
        <authorList>
            <person name="Welch R.A."/>
            <person name="Burland V."/>
            <person name="Plunkett G. III"/>
            <person name="Redford P."/>
            <person name="Roesch P."/>
            <person name="Rasko D."/>
            <person name="Buckles E.L."/>
            <person name="Liou S.-R."/>
            <person name="Boutin A."/>
            <person name="Hackett J."/>
            <person name="Stroud D."/>
            <person name="Mayhew G.F."/>
            <person name="Rose D.J."/>
            <person name="Zhou S."/>
            <person name="Schwartz D.C."/>
            <person name="Perna N.T."/>
            <person name="Mobley H.L.T."/>
            <person name="Donnenberg M.S."/>
            <person name="Blattner F.R."/>
        </authorList>
    </citation>
    <scope>NUCLEOTIDE SEQUENCE [LARGE SCALE GENOMIC DNA]</scope>
    <source>
        <strain>CFT073 / ATCC 700928 / UPEC</strain>
    </source>
</reference>
<comment type="function">
    <text evidence="1">PPIases accelerate the folding of proteins. It catalyzes the cis-trans isomerization of proline imidic peptide bonds in oligopeptides (By similarity).</text>
</comment>
<comment type="catalytic activity">
    <reaction>
        <text>[protein]-peptidylproline (omega=180) = [protein]-peptidylproline (omega=0)</text>
        <dbReference type="Rhea" id="RHEA:16237"/>
        <dbReference type="Rhea" id="RHEA-COMP:10747"/>
        <dbReference type="Rhea" id="RHEA-COMP:10748"/>
        <dbReference type="ChEBI" id="CHEBI:83833"/>
        <dbReference type="ChEBI" id="CHEBI:83834"/>
        <dbReference type="EC" id="5.2.1.8"/>
    </reaction>
</comment>
<comment type="subcellular location">
    <subcellularLocation>
        <location evidence="1">Periplasm</location>
    </subcellularLocation>
</comment>
<comment type="similarity">
    <text evidence="3">Belongs to the cyclophilin-type PPIase family.</text>
</comment>
<keyword id="KW-0413">Isomerase</keyword>
<keyword id="KW-0574">Periplasm</keyword>
<keyword id="KW-1185">Reference proteome</keyword>
<keyword id="KW-0697">Rotamase</keyword>
<keyword id="KW-0732">Signal</keyword>
<protein>
    <recommendedName>
        <fullName>Peptidyl-prolyl cis-trans isomerase A</fullName>
        <shortName>PPIase A</shortName>
        <ecNumber>5.2.1.8</ecNumber>
    </recommendedName>
    <alternativeName>
        <fullName>Cyclophilin A</fullName>
    </alternativeName>
    <alternativeName>
        <fullName>Rotamase A</fullName>
    </alternativeName>
</protein>
<evidence type="ECO:0000250" key="1"/>
<evidence type="ECO:0000255" key="2">
    <source>
        <dbReference type="PROSITE-ProRule" id="PRU00156"/>
    </source>
</evidence>
<evidence type="ECO:0000305" key="3"/>
<dbReference type="EC" id="5.2.1.8"/>
<dbReference type="EMBL" id="AE014075">
    <property type="protein sequence ID" value="AAN82576.1"/>
    <property type="molecule type" value="Genomic_DNA"/>
</dbReference>
<dbReference type="RefSeq" id="WP_000477225.1">
    <property type="nucleotide sequence ID" value="NZ_CP051263.1"/>
</dbReference>
<dbReference type="BMRB" id="P0AFL4"/>
<dbReference type="SMR" id="P0AFL4"/>
<dbReference type="STRING" id="199310.c4138"/>
<dbReference type="GeneID" id="93778634"/>
<dbReference type="KEGG" id="ecc:c4138"/>
<dbReference type="eggNOG" id="COG0652">
    <property type="taxonomic scope" value="Bacteria"/>
</dbReference>
<dbReference type="HOGENOM" id="CLU_012062_16_9_6"/>
<dbReference type="BioCyc" id="ECOL199310:C4138-MONOMER"/>
<dbReference type="Proteomes" id="UP000001410">
    <property type="component" value="Chromosome"/>
</dbReference>
<dbReference type="GO" id="GO:0042597">
    <property type="term" value="C:periplasmic space"/>
    <property type="evidence" value="ECO:0007669"/>
    <property type="project" value="UniProtKB-SubCell"/>
</dbReference>
<dbReference type="GO" id="GO:0003755">
    <property type="term" value="F:peptidyl-prolyl cis-trans isomerase activity"/>
    <property type="evidence" value="ECO:0007669"/>
    <property type="project" value="UniProtKB-KW"/>
</dbReference>
<dbReference type="GO" id="GO:0006457">
    <property type="term" value="P:protein folding"/>
    <property type="evidence" value="ECO:0007669"/>
    <property type="project" value="InterPro"/>
</dbReference>
<dbReference type="CDD" id="cd01920">
    <property type="entry name" value="cyclophilin_EcCYP_like"/>
    <property type="match status" value="1"/>
</dbReference>
<dbReference type="FunFam" id="2.40.100.10:FF:000006">
    <property type="entry name" value="Peptidyl-prolyl cis-trans isomerase"/>
    <property type="match status" value="1"/>
</dbReference>
<dbReference type="Gene3D" id="2.40.100.10">
    <property type="entry name" value="Cyclophilin-like"/>
    <property type="match status" value="1"/>
</dbReference>
<dbReference type="InterPro" id="IPR029000">
    <property type="entry name" value="Cyclophilin-like_dom_sf"/>
</dbReference>
<dbReference type="InterPro" id="IPR020892">
    <property type="entry name" value="Cyclophilin-type_PPIase_CS"/>
</dbReference>
<dbReference type="InterPro" id="IPR002130">
    <property type="entry name" value="Cyclophilin-type_PPIase_dom"/>
</dbReference>
<dbReference type="InterPro" id="IPR044665">
    <property type="entry name" value="E_coli_cyclophilin_A-like"/>
</dbReference>
<dbReference type="NCBIfam" id="NF008151">
    <property type="entry name" value="PRK10903.1"/>
    <property type="match status" value="1"/>
</dbReference>
<dbReference type="PANTHER" id="PTHR43246">
    <property type="entry name" value="PEPTIDYL-PROLYL CIS-TRANS ISOMERASE CYP38, CHLOROPLASTIC"/>
    <property type="match status" value="1"/>
</dbReference>
<dbReference type="Pfam" id="PF00160">
    <property type="entry name" value="Pro_isomerase"/>
    <property type="match status" value="1"/>
</dbReference>
<dbReference type="PRINTS" id="PR00153">
    <property type="entry name" value="CSAPPISMRASE"/>
</dbReference>
<dbReference type="SUPFAM" id="SSF50891">
    <property type="entry name" value="Cyclophilin-like"/>
    <property type="match status" value="1"/>
</dbReference>
<dbReference type="PROSITE" id="PS00170">
    <property type="entry name" value="CSA_PPIASE_1"/>
    <property type="match status" value="1"/>
</dbReference>
<dbReference type="PROSITE" id="PS50072">
    <property type="entry name" value="CSA_PPIASE_2"/>
    <property type="match status" value="1"/>
</dbReference>
<accession>P0AFL4</accession>
<accession>P20752</accession>
<gene>
    <name type="primary">ppiA</name>
    <name type="ordered locus">c4138</name>
</gene>
<sequence length="190" mass="20431">MFKSTLAAMAAVFALSALSPAAMAAKGDPHVLLTTSAGNIELELDKQKAPVSVQNFVDYVNSGFYNNTTFHRVIPGFMIQGGGFTEQMQQKKPNPPIKNEADNGLRNTRGTIAMARTADKDSATSQFFINVADNAFLDHGQRDFGYAVFGKVVKGMDVADKISQVPTHDVGPYQNVPSKPVVILSAKVLP</sequence>
<feature type="signal peptide" evidence="1">
    <location>
        <begin position="1"/>
        <end position="24"/>
    </location>
</feature>
<feature type="chain" id="PRO_0000045121" description="Peptidyl-prolyl cis-trans isomerase A">
    <location>
        <begin position="25"/>
        <end position="190"/>
    </location>
</feature>
<feature type="domain" description="PPIase cyclophilin-type" evidence="2">
    <location>
        <begin position="27"/>
        <end position="188"/>
    </location>
</feature>
<organism>
    <name type="scientific">Escherichia coli O6:H1 (strain CFT073 / ATCC 700928 / UPEC)</name>
    <dbReference type="NCBI Taxonomy" id="199310"/>
    <lineage>
        <taxon>Bacteria</taxon>
        <taxon>Pseudomonadati</taxon>
        <taxon>Pseudomonadota</taxon>
        <taxon>Gammaproteobacteria</taxon>
        <taxon>Enterobacterales</taxon>
        <taxon>Enterobacteriaceae</taxon>
        <taxon>Escherichia</taxon>
    </lineage>
</organism>
<name>PPIA_ECOL6</name>
<proteinExistence type="inferred from homology"/>